<dbReference type="EC" id="6.3.5.5" evidence="1"/>
<dbReference type="EMBL" id="AE005672">
    <property type="protein sequence ID" value="AAK75380.1"/>
    <property type="molecule type" value="Genomic_DNA"/>
</dbReference>
<dbReference type="PIR" id="C95148">
    <property type="entry name" value="C95148"/>
</dbReference>
<dbReference type="RefSeq" id="WP_000166701.1">
    <property type="nucleotide sequence ID" value="NZ_CP155539.1"/>
</dbReference>
<dbReference type="SMR" id="P63733"/>
<dbReference type="PaxDb" id="170187-SP_1276"/>
<dbReference type="EnsemblBacteria" id="AAK75380">
    <property type="protein sequence ID" value="AAK75380"/>
    <property type="gene ID" value="SP_1276"/>
</dbReference>
<dbReference type="KEGG" id="spn:SP_1276"/>
<dbReference type="eggNOG" id="COG0505">
    <property type="taxonomic scope" value="Bacteria"/>
</dbReference>
<dbReference type="PhylomeDB" id="P63733"/>
<dbReference type="BioCyc" id="SPNE170187:G1FZB-1289-MONOMER"/>
<dbReference type="UniPathway" id="UPA00068">
    <property type="reaction ID" value="UER00171"/>
</dbReference>
<dbReference type="UniPathway" id="UPA00070">
    <property type="reaction ID" value="UER00115"/>
</dbReference>
<dbReference type="Proteomes" id="UP000000585">
    <property type="component" value="Chromosome"/>
</dbReference>
<dbReference type="GO" id="GO:0005524">
    <property type="term" value="F:ATP binding"/>
    <property type="evidence" value="ECO:0007669"/>
    <property type="project" value="UniProtKB-UniRule"/>
</dbReference>
<dbReference type="GO" id="GO:0004088">
    <property type="term" value="F:carbamoyl-phosphate synthase (glutamine-hydrolyzing) activity"/>
    <property type="evidence" value="ECO:0007669"/>
    <property type="project" value="UniProtKB-UniRule"/>
</dbReference>
<dbReference type="GO" id="GO:0004359">
    <property type="term" value="F:glutaminase activity"/>
    <property type="evidence" value="ECO:0007669"/>
    <property type="project" value="RHEA"/>
</dbReference>
<dbReference type="GO" id="GO:0006207">
    <property type="term" value="P:'de novo' pyrimidine nucleobase biosynthetic process"/>
    <property type="evidence" value="ECO:0007669"/>
    <property type="project" value="InterPro"/>
</dbReference>
<dbReference type="GO" id="GO:0044205">
    <property type="term" value="P:'de novo' UMP biosynthetic process"/>
    <property type="evidence" value="ECO:0007669"/>
    <property type="project" value="UniProtKB-UniRule"/>
</dbReference>
<dbReference type="GO" id="GO:0006541">
    <property type="term" value="P:glutamine metabolic process"/>
    <property type="evidence" value="ECO:0007669"/>
    <property type="project" value="InterPro"/>
</dbReference>
<dbReference type="GO" id="GO:0006526">
    <property type="term" value="P:L-arginine biosynthetic process"/>
    <property type="evidence" value="ECO:0007669"/>
    <property type="project" value="UniProtKB-UniRule"/>
</dbReference>
<dbReference type="CDD" id="cd01744">
    <property type="entry name" value="GATase1_CPSase"/>
    <property type="match status" value="1"/>
</dbReference>
<dbReference type="FunFam" id="3.40.50.880:FF:000029">
    <property type="entry name" value="Carbamoyl-phosphate synthase small chain"/>
    <property type="match status" value="1"/>
</dbReference>
<dbReference type="FunFam" id="3.50.30.20:FF:000001">
    <property type="entry name" value="Carbamoyl-phosphate synthase small chain"/>
    <property type="match status" value="1"/>
</dbReference>
<dbReference type="Gene3D" id="3.40.50.880">
    <property type="match status" value="1"/>
</dbReference>
<dbReference type="Gene3D" id="3.50.30.20">
    <property type="entry name" value="Carbamoyl-phosphate synthase small subunit, N-terminal domain"/>
    <property type="match status" value="1"/>
</dbReference>
<dbReference type="HAMAP" id="MF_01209">
    <property type="entry name" value="CPSase_S_chain"/>
    <property type="match status" value="1"/>
</dbReference>
<dbReference type="InterPro" id="IPR050472">
    <property type="entry name" value="Anth_synth/Amidotransfase"/>
</dbReference>
<dbReference type="InterPro" id="IPR006274">
    <property type="entry name" value="CarbamoylP_synth_ssu"/>
</dbReference>
<dbReference type="InterPro" id="IPR002474">
    <property type="entry name" value="CarbamoylP_synth_ssu_N"/>
</dbReference>
<dbReference type="InterPro" id="IPR036480">
    <property type="entry name" value="CarbP_synth_ssu_N_sf"/>
</dbReference>
<dbReference type="InterPro" id="IPR029062">
    <property type="entry name" value="Class_I_gatase-like"/>
</dbReference>
<dbReference type="InterPro" id="IPR035686">
    <property type="entry name" value="CPSase_GATase1"/>
</dbReference>
<dbReference type="InterPro" id="IPR017926">
    <property type="entry name" value="GATASE"/>
</dbReference>
<dbReference type="NCBIfam" id="TIGR01368">
    <property type="entry name" value="CPSaseIIsmall"/>
    <property type="match status" value="1"/>
</dbReference>
<dbReference type="NCBIfam" id="NF009475">
    <property type="entry name" value="PRK12838.1"/>
    <property type="match status" value="1"/>
</dbReference>
<dbReference type="PANTHER" id="PTHR43418:SF7">
    <property type="entry name" value="CARBAMOYL-PHOSPHATE SYNTHASE SMALL CHAIN"/>
    <property type="match status" value="1"/>
</dbReference>
<dbReference type="PANTHER" id="PTHR43418">
    <property type="entry name" value="MULTIFUNCTIONAL TRYPTOPHAN BIOSYNTHESIS PROTEIN-RELATED"/>
    <property type="match status" value="1"/>
</dbReference>
<dbReference type="Pfam" id="PF00988">
    <property type="entry name" value="CPSase_sm_chain"/>
    <property type="match status" value="1"/>
</dbReference>
<dbReference type="Pfam" id="PF00117">
    <property type="entry name" value="GATase"/>
    <property type="match status" value="1"/>
</dbReference>
<dbReference type="PRINTS" id="PR00097">
    <property type="entry name" value="ANTSNTHASEII"/>
</dbReference>
<dbReference type="PRINTS" id="PR00099">
    <property type="entry name" value="CPSGATASE"/>
</dbReference>
<dbReference type="PRINTS" id="PR00096">
    <property type="entry name" value="GATASE"/>
</dbReference>
<dbReference type="SMART" id="SM01097">
    <property type="entry name" value="CPSase_sm_chain"/>
    <property type="match status" value="1"/>
</dbReference>
<dbReference type="SUPFAM" id="SSF52021">
    <property type="entry name" value="Carbamoyl phosphate synthetase, small subunit N-terminal domain"/>
    <property type="match status" value="1"/>
</dbReference>
<dbReference type="SUPFAM" id="SSF52317">
    <property type="entry name" value="Class I glutamine amidotransferase-like"/>
    <property type="match status" value="1"/>
</dbReference>
<dbReference type="PROSITE" id="PS51273">
    <property type="entry name" value="GATASE_TYPE_1"/>
    <property type="match status" value="1"/>
</dbReference>
<evidence type="ECO:0000255" key="1">
    <source>
        <dbReference type="HAMAP-Rule" id="MF_01209"/>
    </source>
</evidence>
<sequence length="359" mass="39863">MTKRILVLEDGTVFEGKAFGADIDVTGEIVFNTGMTGYQESITDQSYNGQILTFTYPLVGNYGINRDDYESIIPTCKGVVVFEEARRASNWRNQMTLDEFLKAKKIPGISGIDTRALTKIIRKHGTMRATLTHVGDSMDHVTDQLQATVLPTDNIKQVSTKTSYPAPGVGLSVVLVDFGLKHSILRELSKRNCNVTVVPYSTTAEEILHLNPDGVMLSNGPGNPEDVPQALDMIRGVQGKIPIFGICMGHQLFAMANGAKTYKMKFGHRGFNHAVREIATGRVDFTSQNHGYAVSREDLPEHLIITHEEINDKSVEGVRHRYQPAFSVQYHPDAAPGPHDASYLFDEFIEMMEVFKQSN</sequence>
<proteinExistence type="inferred from homology"/>
<organism>
    <name type="scientific">Streptococcus pneumoniae serotype 4 (strain ATCC BAA-334 / TIGR4)</name>
    <dbReference type="NCBI Taxonomy" id="170187"/>
    <lineage>
        <taxon>Bacteria</taxon>
        <taxon>Bacillati</taxon>
        <taxon>Bacillota</taxon>
        <taxon>Bacilli</taxon>
        <taxon>Lactobacillales</taxon>
        <taxon>Streptococcaceae</taxon>
        <taxon>Streptococcus</taxon>
    </lineage>
</organism>
<protein>
    <recommendedName>
        <fullName evidence="1">Carbamoyl phosphate synthase small chain</fullName>
        <ecNumber evidence="1">6.3.5.5</ecNumber>
    </recommendedName>
    <alternativeName>
        <fullName evidence="1">Carbamoyl phosphate synthetase glutamine chain</fullName>
    </alternativeName>
</protein>
<keyword id="KW-0028">Amino-acid biosynthesis</keyword>
<keyword id="KW-0055">Arginine biosynthesis</keyword>
<keyword id="KW-0067">ATP-binding</keyword>
<keyword id="KW-0315">Glutamine amidotransferase</keyword>
<keyword id="KW-0436">Ligase</keyword>
<keyword id="KW-0547">Nucleotide-binding</keyword>
<keyword id="KW-0665">Pyrimidine biosynthesis</keyword>
<keyword id="KW-1185">Reference proteome</keyword>
<accession>P63733</accession>
<accession>Q97QE3</accession>
<comment type="function">
    <text evidence="1">Small subunit of the glutamine-dependent carbamoyl phosphate synthetase (CPSase). CPSase catalyzes the formation of carbamoyl phosphate from the ammonia moiety of glutamine, carbonate, and phosphate donated by ATP, constituting the first step of 2 biosynthetic pathways, one leading to arginine and/or urea and the other to pyrimidine nucleotides. The small subunit (glutamine amidotransferase) binds and cleaves glutamine to supply the large subunit with the substrate ammonia.</text>
</comment>
<comment type="catalytic activity">
    <reaction evidence="1">
        <text>hydrogencarbonate + L-glutamine + 2 ATP + H2O = carbamoyl phosphate + L-glutamate + 2 ADP + phosphate + 2 H(+)</text>
        <dbReference type="Rhea" id="RHEA:18633"/>
        <dbReference type="ChEBI" id="CHEBI:15377"/>
        <dbReference type="ChEBI" id="CHEBI:15378"/>
        <dbReference type="ChEBI" id="CHEBI:17544"/>
        <dbReference type="ChEBI" id="CHEBI:29985"/>
        <dbReference type="ChEBI" id="CHEBI:30616"/>
        <dbReference type="ChEBI" id="CHEBI:43474"/>
        <dbReference type="ChEBI" id="CHEBI:58228"/>
        <dbReference type="ChEBI" id="CHEBI:58359"/>
        <dbReference type="ChEBI" id="CHEBI:456216"/>
        <dbReference type="EC" id="6.3.5.5"/>
    </reaction>
</comment>
<comment type="catalytic activity">
    <molecule>Carbamoyl phosphate synthase small chain</molecule>
    <reaction evidence="1">
        <text>L-glutamine + H2O = L-glutamate + NH4(+)</text>
        <dbReference type="Rhea" id="RHEA:15889"/>
        <dbReference type="ChEBI" id="CHEBI:15377"/>
        <dbReference type="ChEBI" id="CHEBI:28938"/>
        <dbReference type="ChEBI" id="CHEBI:29985"/>
        <dbReference type="ChEBI" id="CHEBI:58359"/>
    </reaction>
</comment>
<comment type="pathway">
    <text evidence="1">Amino-acid biosynthesis; L-arginine biosynthesis; carbamoyl phosphate from bicarbonate: step 1/1.</text>
</comment>
<comment type="pathway">
    <text evidence="1">Pyrimidine metabolism; UMP biosynthesis via de novo pathway; (S)-dihydroorotate from bicarbonate: step 1/3.</text>
</comment>
<comment type="subunit">
    <text evidence="1">Composed of two chains; the small (or glutamine) chain promotes the hydrolysis of glutamine to ammonia, which is used by the large (or ammonia) chain to synthesize carbamoyl phosphate. Tetramer of heterodimers (alpha,beta)4.</text>
</comment>
<comment type="similarity">
    <text evidence="1">Belongs to the CarA family.</text>
</comment>
<reference key="1">
    <citation type="journal article" date="2001" name="Science">
        <title>Complete genome sequence of a virulent isolate of Streptococcus pneumoniae.</title>
        <authorList>
            <person name="Tettelin H."/>
            <person name="Nelson K.E."/>
            <person name="Paulsen I.T."/>
            <person name="Eisen J.A."/>
            <person name="Read T.D."/>
            <person name="Peterson S.N."/>
            <person name="Heidelberg J.F."/>
            <person name="DeBoy R.T."/>
            <person name="Haft D.H."/>
            <person name="Dodson R.J."/>
            <person name="Durkin A.S."/>
            <person name="Gwinn M.L."/>
            <person name="Kolonay J.F."/>
            <person name="Nelson W.C."/>
            <person name="Peterson J.D."/>
            <person name="Umayam L.A."/>
            <person name="White O."/>
            <person name="Salzberg S.L."/>
            <person name="Lewis M.R."/>
            <person name="Radune D."/>
            <person name="Holtzapple E.K."/>
            <person name="Khouri H.M."/>
            <person name="Wolf A.M."/>
            <person name="Utterback T.R."/>
            <person name="Hansen C.L."/>
            <person name="McDonald L.A."/>
            <person name="Feldblyum T.V."/>
            <person name="Angiuoli S.V."/>
            <person name="Dickinson T."/>
            <person name="Hickey E.K."/>
            <person name="Holt I.E."/>
            <person name="Loftus B.J."/>
            <person name="Yang F."/>
            <person name="Smith H.O."/>
            <person name="Venter J.C."/>
            <person name="Dougherty B.A."/>
            <person name="Morrison D.A."/>
            <person name="Hollingshead S.K."/>
            <person name="Fraser C.M."/>
        </authorList>
    </citation>
    <scope>NUCLEOTIDE SEQUENCE [LARGE SCALE GENOMIC DNA]</scope>
    <source>
        <strain>ATCC BAA-334 / TIGR4</strain>
    </source>
</reference>
<gene>
    <name evidence="1" type="primary">carA</name>
    <name type="ordered locus">SP_1276</name>
</gene>
<feature type="chain" id="PRO_0000112330" description="Carbamoyl phosphate synthase small chain">
    <location>
        <begin position="1"/>
        <end position="359"/>
    </location>
</feature>
<feature type="domain" description="Glutamine amidotransferase type-1" evidence="1">
    <location>
        <begin position="172"/>
        <end position="358"/>
    </location>
</feature>
<feature type="region of interest" description="CPSase" evidence="1">
    <location>
        <begin position="1"/>
        <end position="169"/>
    </location>
</feature>
<feature type="active site" description="Nucleophile" evidence="1">
    <location>
        <position position="247"/>
    </location>
</feature>
<feature type="active site" evidence="1">
    <location>
        <position position="331"/>
    </location>
</feature>
<feature type="active site" evidence="1">
    <location>
        <position position="333"/>
    </location>
</feature>
<feature type="binding site" evidence="1">
    <location>
        <position position="46"/>
    </location>
    <ligand>
        <name>L-glutamine</name>
        <dbReference type="ChEBI" id="CHEBI:58359"/>
    </ligand>
</feature>
<feature type="binding site" evidence="1">
    <location>
        <position position="220"/>
    </location>
    <ligand>
        <name>L-glutamine</name>
        <dbReference type="ChEBI" id="CHEBI:58359"/>
    </ligand>
</feature>
<feature type="binding site" evidence="1">
    <location>
        <position position="222"/>
    </location>
    <ligand>
        <name>L-glutamine</name>
        <dbReference type="ChEBI" id="CHEBI:58359"/>
    </ligand>
</feature>
<feature type="binding site" evidence="1">
    <location>
        <position position="248"/>
    </location>
    <ligand>
        <name>L-glutamine</name>
        <dbReference type="ChEBI" id="CHEBI:58359"/>
    </ligand>
</feature>
<feature type="binding site" evidence="1">
    <location>
        <position position="251"/>
    </location>
    <ligand>
        <name>L-glutamine</name>
        <dbReference type="ChEBI" id="CHEBI:58359"/>
    </ligand>
</feature>
<feature type="binding site" evidence="1">
    <location>
        <position position="289"/>
    </location>
    <ligand>
        <name>L-glutamine</name>
        <dbReference type="ChEBI" id="CHEBI:58359"/>
    </ligand>
</feature>
<feature type="binding site" evidence="1">
    <location>
        <position position="291"/>
    </location>
    <ligand>
        <name>L-glutamine</name>
        <dbReference type="ChEBI" id="CHEBI:58359"/>
    </ligand>
</feature>
<feature type="binding site" evidence="1">
    <location>
        <position position="292"/>
    </location>
    <ligand>
        <name>L-glutamine</name>
        <dbReference type="ChEBI" id="CHEBI:58359"/>
    </ligand>
</feature>
<name>CARA_STRPN</name>